<comment type="function">
    <text evidence="6 7 8">ABC transporter; part of the gene cluster that mediates the biosynthesis of aspercryptins, linear lipopeptides built from six amino acids including 2 highly unusual and nonproteogenic amino acids, 2-amino-octanoic acid (2aoa) and 2-amino-dodecanol (2adol) (PubMed:23248299, PubMed:26563584, PubMed:27310134).</text>
</comment>
<comment type="subcellular location">
    <subcellularLocation>
        <location evidence="10">Cell membrane</location>
        <topology evidence="1">Multi-pass membrane protein</topology>
    </subcellularLocation>
</comment>
<comment type="induction">
    <text evidence="8">Expression is positively regulated by the aspercryptin cluser-specific transcription factor atnN (PubMed:27310134).</text>
</comment>
<comment type="disruption phenotype">
    <text evidence="7">Does not alter the yield of aspercryptin significantly (PubMed:26563584).</text>
</comment>
<comment type="similarity">
    <text evidence="10">Belongs to the ABC transporter superfamily. ABCC family. Conjugate transporter (TC 3.A.1.208) subfamily.</text>
</comment>
<reference key="1">
    <citation type="journal article" date="2005" name="Nature">
        <title>Sequencing of Aspergillus nidulans and comparative analysis with A. fumigatus and A. oryzae.</title>
        <authorList>
            <person name="Galagan J.E."/>
            <person name="Calvo S.E."/>
            <person name="Cuomo C."/>
            <person name="Ma L.-J."/>
            <person name="Wortman J.R."/>
            <person name="Batzoglou S."/>
            <person name="Lee S.-I."/>
            <person name="Bastuerkmen M."/>
            <person name="Spevak C.C."/>
            <person name="Clutterbuck J."/>
            <person name="Kapitonov V."/>
            <person name="Jurka J."/>
            <person name="Scazzocchio C."/>
            <person name="Farman M.L."/>
            <person name="Butler J."/>
            <person name="Purcell S."/>
            <person name="Harris S."/>
            <person name="Braus G.H."/>
            <person name="Draht O."/>
            <person name="Busch S."/>
            <person name="D'Enfert C."/>
            <person name="Bouchier C."/>
            <person name="Goldman G.H."/>
            <person name="Bell-Pedersen D."/>
            <person name="Griffiths-Jones S."/>
            <person name="Doonan J.H."/>
            <person name="Yu J."/>
            <person name="Vienken K."/>
            <person name="Pain A."/>
            <person name="Freitag M."/>
            <person name="Selker E.U."/>
            <person name="Archer D.B."/>
            <person name="Penalva M.A."/>
            <person name="Oakley B.R."/>
            <person name="Momany M."/>
            <person name="Tanaka T."/>
            <person name="Kumagai T."/>
            <person name="Asai K."/>
            <person name="Machida M."/>
            <person name="Nierman W.C."/>
            <person name="Denning D.W."/>
            <person name="Caddick M.X."/>
            <person name="Hynes M."/>
            <person name="Paoletti M."/>
            <person name="Fischer R."/>
            <person name="Miller B.L."/>
            <person name="Dyer P.S."/>
            <person name="Sachs M.S."/>
            <person name="Osmani S.A."/>
            <person name="Birren B.W."/>
        </authorList>
    </citation>
    <scope>NUCLEOTIDE SEQUENCE [LARGE SCALE GENOMIC DNA]</scope>
    <source>
        <strain>FGSC A4 / ATCC 38163 / CBS 112.46 / NRRL 194 / M139</strain>
    </source>
</reference>
<reference key="2">
    <citation type="journal article" date="2009" name="Fungal Genet. Biol.">
        <title>The 2008 update of the Aspergillus nidulans genome annotation: a community effort.</title>
        <authorList>
            <person name="Wortman J.R."/>
            <person name="Gilsenan J.M."/>
            <person name="Joardar V."/>
            <person name="Deegan J."/>
            <person name="Clutterbuck J."/>
            <person name="Andersen M.R."/>
            <person name="Archer D."/>
            <person name="Bencina M."/>
            <person name="Braus G."/>
            <person name="Coutinho P."/>
            <person name="von Dohren H."/>
            <person name="Doonan J."/>
            <person name="Driessen A.J."/>
            <person name="Durek P."/>
            <person name="Espeso E."/>
            <person name="Fekete E."/>
            <person name="Flipphi M."/>
            <person name="Estrada C.G."/>
            <person name="Geysens S."/>
            <person name="Goldman G."/>
            <person name="de Groot P.W."/>
            <person name="Hansen K."/>
            <person name="Harris S.D."/>
            <person name="Heinekamp T."/>
            <person name="Helmstaedt K."/>
            <person name="Henrissat B."/>
            <person name="Hofmann G."/>
            <person name="Homan T."/>
            <person name="Horio T."/>
            <person name="Horiuchi H."/>
            <person name="James S."/>
            <person name="Jones M."/>
            <person name="Karaffa L."/>
            <person name="Karanyi Z."/>
            <person name="Kato M."/>
            <person name="Keller N."/>
            <person name="Kelly D.E."/>
            <person name="Kiel J.A."/>
            <person name="Kim J.M."/>
            <person name="van der Klei I.J."/>
            <person name="Klis F.M."/>
            <person name="Kovalchuk A."/>
            <person name="Krasevec N."/>
            <person name="Kubicek C.P."/>
            <person name="Liu B."/>
            <person name="Maccabe A."/>
            <person name="Meyer V."/>
            <person name="Mirabito P."/>
            <person name="Miskei M."/>
            <person name="Mos M."/>
            <person name="Mullins J."/>
            <person name="Nelson D.R."/>
            <person name="Nielsen J."/>
            <person name="Oakley B.R."/>
            <person name="Osmani S.A."/>
            <person name="Pakula T."/>
            <person name="Paszewski A."/>
            <person name="Paulsen I."/>
            <person name="Pilsyk S."/>
            <person name="Pocsi I."/>
            <person name="Punt P.J."/>
            <person name="Ram A.F."/>
            <person name="Ren Q."/>
            <person name="Robellet X."/>
            <person name="Robson G."/>
            <person name="Seiboth B."/>
            <person name="van Solingen P."/>
            <person name="Specht T."/>
            <person name="Sun J."/>
            <person name="Taheri-Talesh N."/>
            <person name="Takeshita N."/>
            <person name="Ussery D."/>
            <person name="vanKuyk P.A."/>
            <person name="Visser H."/>
            <person name="van de Vondervoort P.J."/>
            <person name="de Vries R.P."/>
            <person name="Walton J."/>
            <person name="Xiang X."/>
            <person name="Xiong Y."/>
            <person name="Zeng A.P."/>
            <person name="Brandt B.W."/>
            <person name="Cornell M.J."/>
            <person name="van den Hondel C.A."/>
            <person name="Visser J."/>
            <person name="Oliver S.G."/>
            <person name="Turner G."/>
        </authorList>
    </citation>
    <scope>GENOME REANNOTATION</scope>
    <source>
        <strain>FGSC A4 / ATCC 38163 / CBS 112.46 / NRRL 194 / M139</strain>
    </source>
</reference>
<reference key="3">
    <citation type="journal article" date="2013" name="Proc. Natl. Acad. Sci. U.S.A.">
        <title>Accurate prediction of secondary metabolite gene clusters in filamentous fungi.</title>
        <authorList>
            <person name="Andersen M.R."/>
            <person name="Nielsen J.B."/>
            <person name="Klitgaard A."/>
            <person name="Petersen L.M."/>
            <person name="Zachariasen M."/>
            <person name="Hansen T.J."/>
            <person name="Blicher L.H."/>
            <person name="Gotfredsen C.H."/>
            <person name="Larsen T.O."/>
            <person name="Nielsen K.F."/>
            <person name="Mortensen U.H."/>
        </authorList>
    </citation>
    <scope>IDENTIFICATION OF THE CLUSTER</scope>
</reference>
<reference key="4">
    <citation type="journal article" date="2016" name="ACS Chem. Biol.">
        <title>New aspercryptins, lipopeptide natural products, revealed by HDAC inhibition in Aspergillus nidulans.</title>
        <authorList>
            <person name="Henke M.T."/>
            <person name="Soukup A.A."/>
            <person name="Goering A.W."/>
            <person name="McClure R.A."/>
            <person name="Thomson R.J."/>
            <person name="Keller N.P."/>
            <person name="Kelleher N.L."/>
        </authorList>
    </citation>
    <scope>FUNCTION</scope>
    <scope>INDUCTION</scope>
</reference>
<reference key="5">
    <citation type="journal article" date="2016" name="Angew. Chem. Int. Ed.">
        <title>Development of genetic dereplication strains in Aspergillus nidulans results in the discovery of aspercryptin.</title>
        <authorList>
            <person name="Chiang Y.M."/>
            <person name="Ahuja M."/>
            <person name="Oakley C.E."/>
            <person name="Entwistle R."/>
            <person name="Asokan A."/>
            <person name="Zutz C."/>
            <person name="Wang C.C."/>
            <person name="Oakley B.R."/>
        </authorList>
    </citation>
    <scope>FUNCTION</scope>
    <scope>DISRUPTION PHENOTYPE</scope>
</reference>
<keyword id="KW-0067">ATP-binding</keyword>
<keyword id="KW-1003">Cell membrane</keyword>
<keyword id="KW-0325">Glycoprotein</keyword>
<keyword id="KW-0472">Membrane</keyword>
<keyword id="KW-0547">Nucleotide-binding</keyword>
<keyword id="KW-1185">Reference proteome</keyword>
<keyword id="KW-0677">Repeat</keyword>
<keyword id="KW-0812">Transmembrane</keyword>
<keyword id="KW-1133">Transmembrane helix</keyword>
<keyword id="KW-0813">Transport</keyword>
<feature type="chain" id="PRO_0000444136" description="ABC transporter atnG">
    <location>
        <begin position="1"/>
        <end position="1557"/>
    </location>
</feature>
<feature type="transmembrane region" description="Helical" evidence="1">
    <location>
        <begin position="27"/>
        <end position="47"/>
    </location>
</feature>
<feature type="transmembrane region" description="Helical" evidence="1">
    <location>
        <begin position="70"/>
        <end position="90"/>
    </location>
</feature>
<feature type="transmembrane region" description="Helical" evidence="1">
    <location>
        <begin position="99"/>
        <end position="119"/>
    </location>
</feature>
<feature type="transmembrane region" description="Helical" evidence="1">
    <location>
        <begin position="131"/>
        <end position="151"/>
    </location>
</feature>
<feature type="transmembrane region" description="Helical" evidence="1">
    <location>
        <begin position="159"/>
        <end position="179"/>
    </location>
</feature>
<feature type="transmembrane region" description="Helical" evidence="1">
    <location>
        <begin position="256"/>
        <end position="276"/>
    </location>
</feature>
<feature type="transmembrane region" description="Helical" evidence="1 3">
    <location>
        <begin position="311"/>
        <end position="331"/>
    </location>
</feature>
<feature type="transmembrane region" description="Helical" evidence="1 3">
    <location>
        <begin position="385"/>
        <end position="405"/>
    </location>
</feature>
<feature type="transmembrane region" description="Helical" evidence="1 3">
    <location>
        <begin position="412"/>
        <end position="432"/>
    </location>
</feature>
<feature type="transmembrane region" description="Helical" evidence="1 3">
    <location>
        <begin position="490"/>
        <end position="510"/>
    </location>
</feature>
<feature type="transmembrane region" description="Helical" evidence="1 3">
    <location>
        <begin position="531"/>
        <end position="551"/>
    </location>
</feature>
<feature type="transmembrane region" description="Helical" evidence="1 3">
    <location>
        <begin position="882"/>
        <end position="902"/>
    </location>
</feature>
<feature type="transmembrane region" description="Helical" evidence="1 3">
    <location>
        <begin position="921"/>
        <end position="941"/>
    </location>
</feature>
<feature type="transmembrane region" description="Helical" evidence="1 3">
    <location>
        <begin position="996"/>
        <end position="1016"/>
    </location>
</feature>
<feature type="transmembrane region" description="Helical" evidence="1 3">
    <location>
        <begin position="1020"/>
        <end position="1040"/>
    </location>
</feature>
<feature type="transmembrane region" description="Helical" evidence="1 3">
    <location>
        <begin position="1105"/>
        <end position="1125"/>
    </location>
</feature>
<feature type="transmembrane region" description="Helical" evidence="1 3">
    <location>
        <begin position="1135"/>
        <end position="1155"/>
    </location>
</feature>
<feature type="domain" description="ABC transmembrane type-1 1" evidence="3">
    <location>
        <begin position="279"/>
        <end position="556"/>
    </location>
</feature>
<feature type="domain" description="ABC transporter 1" evidence="2">
    <location>
        <begin position="593"/>
        <end position="829"/>
    </location>
</feature>
<feature type="domain" description="ABC transmembrane type-1 2" evidence="3">
    <location>
        <begin position="882"/>
        <end position="1162"/>
    </location>
</feature>
<feature type="domain" description="ABC transporter 2" evidence="2">
    <location>
        <begin position="1199"/>
        <end position="1431"/>
    </location>
</feature>
<feature type="region of interest" description="Disordered" evidence="5">
    <location>
        <begin position="1439"/>
        <end position="1464"/>
    </location>
</feature>
<feature type="region of interest" description="Disordered" evidence="5">
    <location>
        <begin position="1503"/>
        <end position="1557"/>
    </location>
</feature>
<feature type="compositionally biased region" description="Basic and acidic residues" evidence="5">
    <location>
        <begin position="1507"/>
        <end position="1522"/>
    </location>
</feature>
<feature type="binding site" evidence="2">
    <location>
        <begin position="625"/>
        <end position="632"/>
    </location>
    <ligand>
        <name>ATP</name>
        <dbReference type="ChEBI" id="CHEBI:30616"/>
    </ligand>
</feature>
<feature type="binding site" evidence="2">
    <location>
        <begin position="1233"/>
        <end position="1240"/>
    </location>
    <ligand>
        <name>ATP</name>
        <dbReference type="ChEBI" id="CHEBI:30616"/>
    </ligand>
</feature>
<feature type="glycosylation site" description="N-linked (GlcNAc...) asparagine" evidence="4">
    <location>
        <position position="202"/>
    </location>
</feature>
<feature type="glycosylation site" description="N-linked (GlcNAc...) asparagine" evidence="4">
    <location>
        <position position="249"/>
    </location>
</feature>
<feature type="glycosylation site" description="N-linked (GlcNAc...) asparagine" evidence="4">
    <location>
        <position position="667"/>
    </location>
</feature>
<feature type="glycosylation site" description="N-linked (GlcNAc...) asparagine" evidence="4">
    <location>
        <position position="916"/>
    </location>
</feature>
<feature type="glycosylation site" description="N-linked (GlcNAc...) asparagine" evidence="4">
    <location>
        <position position="1132"/>
    </location>
</feature>
<feature type="glycosylation site" description="N-linked (GlcNAc...) asparagine" evidence="4">
    <location>
        <position position="1203"/>
    </location>
</feature>
<feature type="glycosylation site" description="N-linked (GlcNAc...) asparagine" evidence="4">
    <location>
        <position position="1218"/>
    </location>
</feature>
<dbReference type="EMBL" id="BN001302">
    <property type="protein sequence ID" value="CBF73441.1"/>
    <property type="molecule type" value="Genomic_DNA"/>
</dbReference>
<dbReference type="EMBL" id="AACD01000135">
    <property type="protein sequence ID" value="EAA59533.1"/>
    <property type="molecule type" value="Genomic_DNA"/>
</dbReference>
<dbReference type="RefSeq" id="XP_681148.1">
    <property type="nucleotide sequence ID" value="XM_676056.1"/>
</dbReference>
<dbReference type="SMR" id="Q5AV01"/>
<dbReference type="STRING" id="227321.Q5AV01"/>
<dbReference type="GlyCosmos" id="Q5AV01">
    <property type="glycosylation" value="7 sites, No reported glycans"/>
</dbReference>
<dbReference type="EnsemblFungi" id="CBF73441">
    <property type="protein sequence ID" value="CBF73441"/>
    <property type="gene ID" value="ANIA_07879"/>
</dbReference>
<dbReference type="GeneID" id="2869038"/>
<dbReference type="KEGG" id="ani:ANIA_07879"/>
<dbReference type="eggNOG" id="KOG0054">
    <property type="taxonomic scope" value="Eukaryota"/>
</dbReference>
<dbReference type="HOGENOM" id="CLU_000604_27_5_1"/>
<dbReference type="InParanoid" id="Q5AV01"/>
<dbReference type="OMA" id="VWALPRI"/>
<dbReference type="OrthoDB" id="6500128at2759"/>
<dbReference type="Proteomes" id="UP000000560">
    <property type="component" value="Chromosome II"/>
</dbReference>
<dbReference type="GO" id="GO:0000324">
    <property type="term" value="C:fungal-type vacuole"/>
    <property type="evidence" value="ECO:0000318"/>
    <property type="project" value="GO_Central"/>
</dbReference>
<dbReference type="GO" id="GO:0016020">
    <property type="term" value="C:membrane"/>
    <property type="evidence" value="ECO:0000318"/>
    <property type="project" value="GO_Central"/>
</dbReference>
<dbReference type="GO" id="GO:0005886">
    <property type="term" value="C:plasma membrane"/>
    <property type="evidence" value="ECO:0007669"/>
    <property type="project" value="UniProtKB-SubCell"/>
</dbReference>
<dbReference type="GO" id="GO:0140359">
    <property type="term" value="F:ABC-type transporter activity"/>
    <property type="evidence" value="ECO:0007669"/>
    <property type="project" value="InterPro"/>
</dbReference>
<dbReference type="GO" id="GO:0005524">
    <property type="term" value="F:ATP binding"/>
    <property type="evidence" value="ECO:0007669"/>
    <property type="project" value="UniProtKB-KW"/>
</dbReference>
<dbReference type="GO" id="GO:0016887">
    <property type="term" value="F:ATP hydrolysis activity"/>
    <property type="evidence" value="ECO:0007669"/>
    <property type="project" value="InterPro"/>
</dbReference>
<dbReference type="GO" id="GO:0042626">
    <property type="term" value="F:ATPase-coupled transmembrane transporter activity"/>
    <property type="evidence" value="ECO:0000318"/>
    <property type="project" value="GO_Central"/>
</dbReference>
<dbReference type="GO" id="GO:0055085">
    <property type="term" value="P:transmembrane transport"/>
    <property type="evidence" value="ECO:0000318"/>
    <property type="project" value="GO_Central"/>
</dbReference>
<dbReference type="CDD" id="cd18579">
    <property type="entry name" value="ABC_6TM_ABCC_D1"/>
    <property type="match status" value="1"/>
</dbReference>
<dbReference type="CDD" id="cd18580">
    <property type="entry name" value="ABC_6TM_ABCC_D2"/>
    <property type="match status" value="1"/>
</dbReference>
<dbReference type="CDD" id="cd03250">
    <property type="entry name" value="ABCC_MRP_domain1"/>
    <property type="match status" value="1"/>
</dbReference>
<dbReference type="CDD" id="cd03244">
    <property type="entry name" value="ABCC_MRP_domain2"/>
    <property type="match status" value="1"/>
</dbReference>
<dbReference type="FunFam" id="1.20.1560.10:FF:000055">
    <property type="entry name" value="ABC multidrug transporter (Eurofung)"/>
    <property type="match status" value="1"/>
</dbReference>
<dbReference type="FunFam" id="1.20.1560.10:FF:000066">
    <property type="entry name" value="ABC multidrug transporter (Eurofung)"/>
    <property type="match status" value="1"/>
</dbReference>
<dbReference type="FunFam" id="3.40.50.300:FF:000838">
    <property type="entry name" value="ABC multidrug transporter (Eurofung)"/>
    <property type="match status" value="1"/>
</dbReference>
<dbReference type="FunFam" id="3.40.50.300:FF:001854">
    <property type="entry name" value="ABC multidrug transporter (Eurofung)"/>
    <property type="match status" value="1"/>
</dbReference>
<dbReference type="Gene3D" id="1.20.1560.10">
    <property type="entry name" value="ABC transporter type 1, transmembrane domain"/>
    <property type="match status" value="2"/>
</dbReference>
<dbReference type="Gene3D" id="3.40.50.300">
    <property type="entry name" value="P-loop containing nucleotide triphosphate hydrolases"/>
    <property type="match status" value="2"/>
</dbReference>
<dbReference type="InterPro" id="IPR003593">
    <property type="entry name" value="AAA+_ATPase"/>
</dbReference>
<dbReference type="InterPro" id="IPR011527">
    <property type="entry name" value="ABC1_TM_dom"/>
</dbReference>
<dbReference type="InterPro" id="IPR036640">
    <property type="entry name" value="ABC1_TM_sf"/>
</dbReference>
<dbReference type="InterPro" id="IPR003439">
    <property type="entry name" value="ABC_transporter-like_ATP-bd"/>
</dbReference>
<dbReference type="InterPro" id="IPR017871">
    <property type="entry name" value="ABC_transporter-like_CS"/>
</dbReference>
<dbReference type="InterPro" id="IPR050173">
    <property type="entry name" value="ABC_transporter_C-like"/>
</dbReference>
<dbReference type="InterPro" id="IPR044746">
    <property type="entry name" value="ABCC_6TM_D1"/>
</dbReference>
<dbReference type="InterPro" id="IPR044726">
    <property type="entry name" value="ABCC_6TM_D2"/>
</dbReference>
<dbReference type="InterPro" id="IPR027417">
    <property type="entry name" value="P-loop_NTPase"/>
</dbReference>
<dbReference type="InterPro" id="IPR056227">
    <property type="entry name" value="TMD0_ABC"/>
</dbReference>
<dbReference type="PANTHER" id="PTHR24223:SF399">
    <property type="entry name" value="ABC TRANSPORTER ATNG"/>
    <property type="match status" value="1"/>
</dbReference>
<dbReference type="PANTHER" id="PTHR24223">
    <property type="entry name" value="ATP-BINDING CASSETTE SUB-FAMILY C"/>
    <property type="match status" value="1"/>
</dbReference>
<dbReference type="Pfam" id="PF00664">
    <property type="entry name" value="ABC_membrane"/>
    <property type="match status" value="1"/>
</dbReference>
<dbReference type="Pfam" id="PF00005">
    <property type="entry name" value="ABC_tran"/>
    <property type="match status" value="2"/>
</dbReference>
<dbReference type="Pfam" id="PF24357">
    <property type="entry name" value="TMD0_ABC"/>
    <property type="match status" value="1"/>
</dbReference>
<dbReference type="SMART" id="SM00382">
    <property type="entry name" value="AAA"/>
    <property type="match status" value="2"/>
</dbReference>
<dbReference type="SUPFAM" id="SSF90123">
    <property type="entry name" value="ABC transporter transmembrane region"/>
    <property type="match status" value="2"/>
</dbReference>
<dbReference type="SUPFAM" id="SSF52540">
    <property type="entry name" value="P-loop containing nucleoside triphosphate hydrolases"/>
    <property type="match status" value="2"/>
</dbReference>
<dbReference type="PROSITE" id="PS50929">
    <property type="entry name" value="ABC_TM1F"/>
    <property type="match status" value="2"/>
</dbReference>
<dbReference type="PROSITE" id="PS00211">
    <property type="entry name" value="ABC_TRANSPORTER_1"/>
    <property type="match status" value="1"/>
</dbReference>
<dbReference type="PROSITE" id="PS50893">
    <property type="entry name" value="ABC_TRANSPORTER_2"/>
    <property type="match status" value="2"/>
</dbReference>
<organism>
    <name type="scientific">Emericella nidulans (strain FGSC A4 / ATCC 38163 / CBS 112.46 / NRRL 194 / M139)</name>
    <name type="common">Aspergillus nidulans</name>
    <dbReference type="NCBI Taxonomy" id="227321"/>
    <lineage>
        <taxon>Eukaryota</taxon>
        <taxon>Fungi</taxon>
        <taxon>Dikarya</taxon>
        <taxon>Ascomycota</taxon>
        <taxon>Pezizomycotina</taxon>
        <taxon>Eurotiomycetes</taxon>
        <taxon>Eurotiomycetidae</taxon>
        <taxon>Eurotiales</taxon>
        <taxon>Aspergillaceae</taxon>
        <taxon>Aspergillus</taxon>
        <taxon>Aspergillus subgen. Nidulantes</taxon>
    </lineage>
</organism>
<protein>
    <recommendedName>
        <fullName evidence="9">ABC transporter atnG</fullName>
    </recommendedName>
    <alternativeName>
        <fullName evidence="9">Aspercryptin biosynthesis cluster protein G</fullName>
    </alternativeName>
</protein>
<evidence type="ECO:0000255" key="1"/>
<evidence type="ECO:0000255" key="2">
    <source>
        <dbReference type="PROSITE-ProRule" id="PRU00434"/>
    </source>
</evidence>
<evidence type="ECO:0000255" key="3">
    <source>
        <dbReference type="PROSITE-ProRule" id="PRU00441"/>
    </source>
</evidence>
<evidence type="ECO:0000255" key="4">
    <source>
        <dbReference type="PROSITE-ProRule" id="PRU00498"/>
    </source>
</evidence>
<evidence type="ECO:0000256" key="5">
    <source>
        <dbReference type="SAM" id="MobiDB-lite"/>
    </source>
</evidence>
<evidence type="ECO:0000269" key="6">
    <source>
    </source>
</evidence>
<evidence type="ECO:0000269" key="7">
    <source>
    </source>
</evidence>
<evidence type="ECO:0000269" key="8">
    <source>
    </source>
</evidence>
<evidence type="ECO:0000303" key="9">
    <source>
    </source>
</evidence>
<evidence type="ECO:0000305" key="10"/>
<accession>Q5AV01</accession>
<accession>A0A1U8QZH1</accession>
<accession>C8V3Y4</accession>
<gene>
    <name evidence="9" type="primary">atnG</name>
    <name type="ORF">ANIA_07879</name>
</gene>
<sequence length="1557" mass="173274">MAGSCTIDEHNHFGPIVGDACYGGLDFTLYFEEAFLSIFPAATLILAATVRCFLVRSASLKVRGGWLHTLKLLLLAPYSISQLLLLAFWMRSGTPKTDLTIASTVLRFIATLPCGYLIHLQHHRSLRPSKIISIYFLLTLLFDIPLARTIWTIQGLRTVSAIFIAGTVVKALLLILETWEKRRLVRPMYASPAPEDWTGVINRSLFWWINPLLFRGARTSLSVGDLFHLESCMLPDPDGKHRVVMHWENVTNKDKAGAMVVPIAKAFKWDLLAGVFPRLCQSGFIISQPFLVRATVELFVYRDRPDSRSKATLLIGAYALVYGGIAIATATAQHKTYRVITMMRAALVDMIFEKSTAINAHKNDDSAALTLMSTDIERITHCGRYIHDTWASLIEIGIALYLLYNELDTAGIAPIIIAFGCTVTAMKIAMMAGERQNLWIEAIQKRVAITAEMLGSMKGVKISGLTDLLFNKIQALREHEILASQKFRSLLIAVVGLSNFNTLMTPIVSFTIYAMGSGDAPNEILGSARALTSLTLFNLFAVFIGTLVESISETAMALECLDRIRNYLAQEAHQDPREVNSSPVTEKTPCIEAFEVDVGWKNGDESILHRLSYRIERHSLTMIVGAVGCGKTTLVKAMLGEVNCLTGKMKVNCDRMAYCGQDAWLTNGSIRENILGGSPYDPPWYSTVVAACGLEKDFTELTAGDQTAVGSKGVSLSGGQKQRLGSLDVLTRAQALARALYSGVETILLDDALSGLDPVTDEHIFTQVLGPNGLARKQHLTVVMVTHAVHRLPYADHIIALNTDGTILVQGTFDDCCKRLDYIQGFAIAQPPAIQMKSAMPKAVEVTKAAPYSDEAISDARRSSDYQTYLYYLTTVPWHNWLVYFGLMAIFVFLQAFPTVWVTWWARDNDAQPNKNRSMRIGVYWMFGVLGACFLLATACFYMLKIVAKTASVIHSRLLRTVVNAPMSFFASTDSGTTLNRFSQDLELIDMELPLAVLQTCLALFLCVAQLIIIAVSARYITATIPLCVLVYCIIGTFYMRTSRQLRIMEIEAKSPLFSNFMELLNGLITIRAFNWAEQYKLRNRALLAESQRPYYLLYAVQRWLSLVLDMTVAGFVLVLMGIAVGTMHSTNASSLGLALVNVVSLSASVKALITDWTVLETSLGAVTRVKHFAESTESEDMVQERDLPPEDWTSRGTVEYKNVSAFYRDPSKPVLKNLSFRVHKGEKVAIVGRSGSGKSTLVSALFRMIELCEGTISVDGIDITTLRRQAIRSAIIGLPQDPLLLEGSTIRENVDPFDYCPDEAVINTLKRVGLWEILESKDGLETIASPELFSHGQKQLLCMAKAMLRHGNIIVFDEATSGVDPETDEMMQELIRSCFAQHTVLTVTHRLDTIIDYDRVLVMDNGILLESDPPRTLLSRPSVFRELYKSSRGWEEYERQERAEAEARRRERVEKERAEEELRGRRGLISEKEEPETVSAIREHWNVVNQLFGGIIPRAVPRTRSRSRDHSAERRESKRYSGGDWTGEGDGDGGDGGLGRRDTRRHLTGLAARGLH</sequence>
<name>ATNG_EMENI</name>
<proteinExistence type="evidence at transcript level"/>